<reference key="1">
    <citation type="journal article" date="1989" name="Virology">
        <title>Molecular cloning and sequence analysis of duck hepatitis B virus genomes of a new variant isolated from Shanghai ducks.</title>
        <authorList>
            <person name="Uchida M."/>
            <person name="Esumi M."/>
            <person name="Shikata T."/>
        </authorList>
    </citation>
    <scope>NUCLEOTIDE SEQUENCE [GENOMIC DNA]</scope>
</reference>
<proteinExistence type="inferred from homology"/>
<gene>
    <name type="primary">C</name>
</gene>
<dbReference type="EMBL" id="M32991">
    <property type="protein sequence ID" value="AAA45750.1"/>
    <property type="status" value="ALT_INIT"/>
    <property type="molecule type" value="Genomic_DNA"/>
</dbReference>
<dbReference type="PIR" id="F33746">
    <property type="entry name" value="NKVLWD"/>
</dbReference>
<dbReference type="SMR" id="P17191"/>
<dbReference type="Proteomes" id="UP000007558">
    <property type="component" value="Genome"/>
</dbReference>
<dbReference type="GO" id="GO:0005576">
    <property type="term" value="C:extracellular region"/>
    <property type="evidence" value="ECO:0007669"/>
    <property type="project" value="UniProtKB-SubCell"/>
</dbReference>
<dbReference type="GO" id="GO:0005198">
    <property type="term" value="F:structural molecule activity"/>
    <property type="evidence" value="ECO:0007669"/>
    <property type="project" value="InterPro"/>
</dbReference>
<dbReference type="Gene3D" id="1.10.4090.10">
    <property type="entry name" value="Viral capsid, core domain supefamily, Hepatitis B virus"/>
    <property type="match status" value="2"/>
</dbReference>
<dbReference type="InterPro" id="IPR002006">
    <property type="entry name" value="Hepatitis_core"/>
</dbReference>
<dbReference type="InterPro" id="IPR036459">
    <property type="entry name" value="Viral_capsid_core_dom_sf_HBV"/>
</dbReference>
<dbReference type="Pfam" id="PF00906">
    <property type="entry name" value="Hepatitis_core"/>
    <property type="match status" value="1"/>
</dbReference>
<dbReference type="SUPFAM" id="SSF47852">
    <property type="entry name" value="Hepatitis B viral capsid (hbcag)"/>
    <property type="match status" value="1"/>
</dbReference>
<accession>P17191</accession>
<feature type="signal peptide" evidence="2">
    <location>
        <begin position="1"/>
        <end position="19"/>
    </location>
</feature>
<feature type="chain" id="PRO_0000222305" description="External core antigen">
    <location>
        <begin position="20"/>
        <end position="272"/>
    </location>
</feature>
<feature type="propeptide" id="PRO_0000324685" evidence="1">
    <location>
        <begin position="273"/>
        <end position="305"/>
    </location>
</feature>
<feature type="region of interest" description="Disordered" evidence="3">
    <location>
        <begin position="226"/>
        <end position="305"/>
    </location>
</feature>
<feature type="compositionally biased region" description="Basic residues" evidence="3">
    <location>
        <begin position="258"/>
        <end position="277"/>
    </location>
</feature>
<feature type="compositionally biased region" description="Basic residues" evidence="3">
    <location>
        <begin position="295"/>
        <end position="305"/>
    </location>
</feature>
<feature type="site" description="Cleavage; by host" evidence="1">
    <location>
        <begin position="272"/>
        <end position="273"/>
    </location>
</feature>
<organism>
    <name type="scientific">Duck hepatitis B virus (isolate white Shanghai duck S31)</name>
    <name type="common">DHBV</name>
    <dbReference type="NCBI Taxonomy" id="10440"/>
    <lineage>
        <taxon>Viruses</taxon>
        <taxon>Riboviria</taxon>
        <taxon>Pararnavirae</taxon>
        <taxon>Artverviricota</taxon>
        <taxon>Revtraviricetes</taxon>
        <taxon>Blubervirales</taxon>
        <taxon>Hepadnaviridae</taxon>
        <taxon>Avihepadnavirus</taxon>
        <taxon>Duck hepatitis B virus</taxon>
    </lineage>
</organism>
<sequence>MWNLRITPLSFGAACQGIFTSTLLLSALTVPLVCTIVYDSCLYMDINASRALANVYDLPDDFFPKIDDLVRDAKDALEPYWKSDSIKKHVLIATHFVDLIEDFWQTTQGMHEIAESLRAVIPPTTAPVPTGYLIQHEEAEEIPLGDLFKHQEERIVSFQPDYPITARIHAHLKAYAKINEESLDRARRLLWWHYNCLLWGEANVTNYISRLRTWLSTPEKYRGRDAPTIEAITRPIQVAQGGRKTSSGTRKPRGLEPRRRKVKTTFVYGRRRSKSRERRAPSPQRAGSPLPRSSSSHHRSPSPRK</sequence>
<organismHost>
    <name type="scientific">Anas</name>
    <name type="common">ducks</name>
    <dbReference type="NCBI Taxonomy" id="8835"/>
</organismHost>
<protein>
    <recommendedName>
        <fullName>External core antigen</fullName>
    </recommendedName>
    <alternativeName>
        <fullName>HBeAg</fullName>
    </alternativeName>
    <alternativeName>
        <fullName>Precore protein</fullName>
    </alternativeName>
</protein>
<comment type="function">
    <text evidence="1">May regulate immune response to the intracellular capsid in acting as a T-cell tolerogen, by having an immunoregulatory effect which prevents destruction of infected cells by cytotoxic T-cells.</text>
</comment>
<comment type="subunit">
    <text evidence="1">Homodimerizes.</text>
</comment>
<comment type="subcellular location">
    <subcellularLocation>
        <location evidence="1">Secreted</location>
    </subcellularLocation>
</comment>
<comment type="alternative products">
    <event type="alternative initiation"/>
    <isoform>
        <id>P17191-1</id>
        <name>External core antigen</name>
        <sequence type="displayed"/>
    </isoform>
    <isoform>
        <id>P0C6K2-1</id>
        <name>Capsid protein</name>
        <sequence type="external"/>
    </isoform>
</comment>
<comment type="similarity">
    <text evidence="4">Belongs to the avihepadnavirus precore antigen family.</text>
</comment>
<comment type="sequence caution" evidence="4">
    <conflict type="erroneous initiation">
        <sequence resource="EMBL-CDS" id="AAA45750"/>
    </conflict>
</comment>
<keyword id="KW-0024">Alternative initiation</keyword>
<keyword id="KW-0945">Host-virus interaction</keyword>
<keyword id="KW-0964">Secreted</keyword>
<keyword id="KW-0732">Signal</keyword>
<keyword id="KW-0899">Viral immunoevasion</keyword>
<evidence type="ECO:0000250" key="1"/>
<evidence type="ECO:0000255" key="2"/>
<evidence type="ECO:0000256" key="3">
    <source>
        <dbReference type="SAM" id="MobiDB-lite"/>
    </source>
</evidence>
<evidence type="ECO:0000305" key="4"/>
<name>HBEAG_HPBDW</name>